<evidence type="ECO:0000250" key="1">
    <source>
        <dbReference type="UniProtKB" id="P03887"/>
    </source>
</evidence>
<evidence type="ECO:0000255" key="2"/>
<evidence type="ECO:0000269" key="3">
    <source>
    </source>
</evidence>
<evidence type="ECO:0000305" key="4"/>
<evidence type="ECO:0000312" key="5">
    <source>
        <dbReference type="WormBase" id="MTCE.11"/>
    </source>
</evidence>
<feature type="chain" id="PRO_0000117361" description="NADH-ubiquinone oxidoreductase chain 1">
    <location>
        <begin position="1"/>
        <end position="291"/>
    </location>
</feature>
<feature type="transmembrane region" description="Helical" evidence="2">
    <location>
        <begin position="2"/>
        <end position="22"/>
    </location>
</feature>
<feature type="transmembrane region" description="Helical" evidence="2">
    <location>
        <begin position="71"/>
        <end position="91"/>
    </location>
</feature>
<feature type="transmembrane region" description="Helical" evidence="2">
    <location>
        <begin position="104"/>
        <end position="124"/>
    </location>
</feature>
<feature type="transmembrane region" description="Helical" evidence="2">
    <location>
        <begin position="142"/>
        <end position="162"/>
    </location>
</feature>
<feature type="transmembrane region" description="Helical" evidence="2">
    <location>
        <begin position="164"/>
        <end position="184"/>
    </location>
</feature>
<feature type="transmembrane region" description="Helical" evidence="2">
    <location>
        <begin position="212"/>
        <end position="232"/>
    </location>
</feature>
<feature type="transmembrane region" description="Helical" evidence="2">
    <location>
        <begin position="234"/>
        <end position="254"/>
    </location>
</feature>
<feature type="transmembrane region" description="Helical" evidence="2">
    <location>
        <begin position="269"/>
        <end position="289"/>
    </location>
</feature>
<feature type="sequence variant" description="In strain: CB4853 and CB4858." evidence="3">
    <original>I</original>
    <variation>M</variation>
    <location>
        <position position="181"/>
    </location>
</feature>
<feature type="sequence variant" description="In strain: Bristol N2, CB4855, CB4857, CB4858 and KR314." evidence="3">
    <original>K</original>
    <variation>N</variation>
    <location>
        <position position="238"/>
    </location>
</feature>
<feature type="sequence variant" description="In strain: CB4854." evidence="3">
    <original>S</original>
    <variation>I</variation>
    <location>
        <position position="246"/>
    </location>
</feature>
<dbReference type="EC" id="7.1.1.2" evidence="1"/>
<dbReference type="EMBL" id="X54252">
    <property type="status" value="NOT_ANNOTATED_CDS"/>
    <property type="molecule type" value="Genomic_DNA"/>
</dbReference>
<dbReference type="EMBL" id="AY171133">
    <property type="protein sequence ID" value="AAO16387.1"/>
    <property type="molecule type" value="Genomic_DNA"/>
</dbReference>
<dbReference type="EMBL" id="AY171134">
    <property type="protein sequence ID" value="AAO16390.1"/>
    <property type="molecule type" value="Genomic_DNA"/>
</dbReference>
<dbReference type="EMBL" id="AY171135">
    <property type="protein sequence ID" value="AAO16393.1"/>
    <property type="molecule type" value="Genomic_DNA"/>
</dbReference>
<dbReference type="EMBL" id="AY171136">
    <property type="protein sequence ID" value="AAO16396.1"/>
    <property type="molecule type" value="Genomic_DNA"/>
</dbReference>
<dbReference type="EMBL" id="AY171137">
    <property type="protein sequence ID" value="AAO16399.1"/>
    <property type="molecule type" value="Genomic_DNA"/>
</dbReference>
<dbReference type="EMBL" id="AY171138">
    <property type="protein sequence ID" value="AAO16402.1"/>
    <property type="molecule type" value="Genomic_DNA"/>
</dbReference>
<dbReference type="EMBL" id="AY171139">
    <property type="protein sequence ID" value="AAO16405.1"/>
    <property type="molecule type" value="Genomic_DNA"/>
</dbReference>
<dbReference type="EMBL" id="AY171140">
    <property type="protein sequence ID" value="AAO16408.1"/>
    <property type="molecule type" value="Genomic_DNA"/>
</dbReference>
<dbReference type="EMBL" id="AY171141">
    <property type="protein sequence ID" value="AAO16411.1"/>
    <property type="molecule type" value="Genomic_DNA"/>
</dbReference>
<dbReference type="EMBL" id="AY171142">
    <property type="protein sequence ID" value="AAO16414.1"/>
    <property type="molecule type" value="Genomic_DNA"/>
</dbReference>
<dbReference type="EMBL" id="AY171143">
    <property type="protein sequence ID" value="AAO16417.1"/>
    <property type="molecule type" value="Genomic_DNA"/>
</dbReference>
<dbReference type="EMBL" id="AY171144">
    <property type="protein sequence ID" value="AAO16420.1"/>
    <property type="molecule type" value="Genomic_DNA"/>
</dbReference>
<dbReference type="EMBL" id="AY171145">
    <property type="protein sequence ID" value="AAO16423.1"/>
    <property type="molecule type" value="Genomic_DNA"/>
</dbReference>
<dbReference type="EMBL" id="AY171146">
    <property type="protein sequence ID" value="AAO16426.1"/>
    <property type="molecule type" value="Genomic_DNA"/>
</dbReference>
<dbReference type="EMBL" id="AY171147">
    <property type="protein sequence ID" value="AAO16429.1"/>
    <property type="molecule type" value="Genomic_DNA"/>
</dbReference>
<dbReference type="EMBL" id="AY171148">
    <property type="protein sequence ID" value="AAO16310.1"/>
    <property type="molecule type" value="Genomic_DNA"/>
</dbReference>
<dbReference type="EMBL" id="AY171149">
    <property type="protein sequence ID" value="AAO16312.1"/>
    <property type="molecule type" value="Genomic_DNA"/>
</dbReference>
<dbReference type="EMBL" id="AY171150">
    <property type="protein sequence ID" value="AAO16314.1"/>
    <property type="molecule type" value="Genomic_DNA"/>
</dbReference>
<dbReference type="EMBL" id="AY171151">
    <property type="protein sequence ID" value="AAO16316.1"/>
    <property type="molecule type" value="Genomic_DNA"/>
</dbReference>
<dbReference type="EMBL" id="AY171152">
    <property type="protein sequence ID" value="AAO16318.1"/>
    <property type="molecule type" value="Genomic_DNA"/>
</dbReference>
<dbReference type="EMBL" id="AY171153">
    <property type="protein sequence ID" value="AAO16320.1"/>
    <property type="molecule type" value="Genomic_DNA"/>
</dbReference>
<dbReference type="EMBL" id="AY171154">
    <property type="protein sequence ID" value="AAO16322.1"/>
    <property type="molecule type" value="Genomic_DNA"/>
</dbReference>
<dbReference type="EMBL" id="AY171155">
    <property type="protein sequence ID" value="AAO16324.1"/>
    <property type="molecule type" value="Genomic_DNA"/>
</dbReference>
<dbReference type="EMBL" id="AY171156">
    <property type="protein sequence ID" value="AAO16326.1"/>
    <property type="molecule type" value="Genomic_DNA"/>
</dbReference>
<dbReference type="EMBL" id="AY171157">
    <property type="protein sequence ID" value="AAO16328.1"/>
    <property type="molecule type" value="Genomic_DNA"/>
</dbReference>
<dbReference type="EMBL" id="AY171158">
    <property type="protein sequence ID" value="AAO16330.1"/>
    <property type="molecule type" value="Genomic_DNA"/>
</dbReference>
<dbReference type="EMBL" id="AY171159">
    <property type="protein sequence ID" value="AAO16332.1"/>
    <property type="molecule type" value="Genomic_DNA"/>
</dbReference>
<dbReference type="EMBL" id="AY171160">
    <property type="protein sequence ID" value="AAO16334.1"/>
    <property type="molecule type" value="Genomic_DNA"/>
</dbReference>
<dbReference type="EMBL" id="AY171161">
    <property type="protein sequence ID" value="AAO16336.1"/>
    <property type="molecule type" value="Genomic_DNA"/>
</dbReference>
<dbReference type="EMBL" id="AY171162">
    <property type="protein sequence ID" value="AAO16338.1"/>
    <property type="molecule type" value="Genomic_DNA"/>
</dbReference>
<dbReference type="PIR" id="S26028">
    <property type="entry name" value="S26028"/>
</dbReference>
<dbReference type="SMR" id="P24887"/>
<dbReference type="FunCoup" id="P24887">
    <property type="interactions" value="92"/>
</dbReference>
<dbReference type="STRING" id="6239.MTCE.11.1"/>
<dbReference type="PaxDb" id="6239-MTCE.11"/>
<dbReference type="AGR" id="WB:WBGene00010959"/>
<dbReference type="WormBase" id="MTCE.11">
    <property type="protein sequence ID" value="CE34065"/>
    <property type="gene ID" value="WBGene00010959"/>
    <property type="gene designation" value="nduo-1"/>
</dbReference>
<dbReference type="eggNOG" id="KOG4770">
    <property type="taxonomic scope" value="Eukaryota"/>
</dbReference>
<dbReference type="HOGENOM" id="CLU_015134_0_1_1"/>
<dbReference type="InParanoid" id="P24887"/>
<dbReference type="PhylomeDB" id="P24887"/>
<dbReference type="PRO" id="PR:P24887"/>
<dbReference type="Proteomes" id="UP000001940">
    <property type="component" value="Mitochondrion"/>
</dbReference>
<dbReference type="GO" id="GO:0005743">
    <property type="term" value="C:mitochondrial inner membrane"/>
    <property type="evidence" value="ECO:0007669"/>
    <property type="project" value="UniProtKB-SubCell"/>
</dbReference>
<dbReference type="GO" id="GO:0045271">
    <property type="term" value="C:respiratory chain complex I"/>
    <property type="evidence" value="ECO:0000250"/>
    <property type="project" value="WormBase"/>
</dbReference>
<dbReference type="GO" id="GO:0008137">
    <property type="term" value="F:NADH dehydrogenase (ubiquinone) activity"/>
    <property type="evidence" value="ECO:0000303"/>
    <property type="project" value="UniProtKB"/>
</dbReference>
<dbReference type="GO" id="GO:0009060">
    <property type="term" value="P:aerobic respiration"/>
    <property type="evidence" value="ECO:0000318"/>
    <property type="project" value="GO_Central"/>
</dbReference>
<dbReference type="GO" id="GO:0006120">
    <property type="term" value="P:mitochondrial electron transport, NADH to ubiquinone"/>
    <property type="evidence" value="ECO:0000303"/>
    <property type="project" value="UniProtKB"/>
</dbReference>
<dbReference type="InterPro" id="IPR001694">
    <property type="entry name" value="NADH_UbQ_OxRdtase_su1/FPO"/>
</dbReference>
<dbReference type="InterPro" id="IPR018086">
    <property type="entry name" value="NADH_UbQ_OxRdtase_su1_CS"/>
</dbReference>
<dbReference type="PANTHER" id="PTHR11432">
    <property type="entry name" value="NADH DEHYDROGENASE SUBUNIT 1"/>
    <property type="match status" value="1"/>
</dbReference>
<dbReference type="PANTHER" id="PTHR11432:SF3">
    <property type="entry name" value="NADH-UBIQUINONE OXIDOREDUCTASE CHAIN 1"/>
    <property type="match status" value="1"/>
</dbReference>
<dbReference type="Pfam" id="PF00146">
    <property type="entry name" value="NADHdh"/>
    <property type="match status" value="1"/>
</dbReference>
<dbReference type="PROSITE" id="PS00667">
    <property type="entry name" value="COMPLEX1_ND1_1"/>
    <property type="match status" value="1"/>
</dbReference>
<dbReference type="PROSITE" id="PS00668">
    <property type="entry name" value="COMPLEX1_ND1_2"/>
    <property type="match status" value="1"/>
</dbReference>
<name>NU1M_CAEEL</name>
<accession>P24887</accession>
<comment type="function">
    <text evidence="1">Core subunit of the mitochondrial membrane respiratory chain NADH dehydrogenase (Complex I) that is believed to belong to the minimal assembly required for catalysis. Complex I functions in the transfer of electrons from NADH to the respiratory chain. The immediate electron acceptor for the enzyme is believed to be ubiquinone.</text>
</comment>
<comment type="catalytic activity">
    <reaction evidence="1">
        <text>a ubiquinone + NADH + 5 H(+)(in) = a ubiquinol + NAD(+) + 4 H(+)(out)</text>
        <dbReference type="Rhea" id="RHEA:29091"/>
        <dbReference type="Rhea" id="RHEA-COMP:9565"/>
        <dbReference type="Rhea" id="RHEA-COMP:9566"/>
        <dbReference type="ChEBI" id="CHEBI:15378"/>
        <dbReference type="ChEBI" id="CHEBI:16389"/>
        <dbReference type="ChEBI" id="CHEBI:17976"/>
        <dbReference type="ChEBI" id="CHEBI:57540"/>
        <dbReference type="ChEBI" id="CHEBI:57945"/>
        <dbReference type="EC" id="7.1.1.2"/>
    </reaction>
</comment>
<comment type="subcellular location">
    <subcellularLocation>
        <location evidence="1">Mitochondrion inner membrane</location>
        <topology evidence="1">Multi-pass membrane protein</topology>
    </subcellularLocation>
</comment>
<comment type="similarity">
    <text evidence="4">Belongs to the complex I subunit 1 family.</text>
</comment>
<comment type="sequence caution" evidence="4">
    <conflict type="erroneous termination">
        <sequence resource="EMBL" id="X54252"/>
    </conflict>
    <text>Truncated C-terminus.</text>
</comment>
<gene>
    <name evidence="5" type="primary">nduo-1</name>
    <name evidence="5" type="synonym">nd1</name>
    <name evidence="5" type="ORF">MTCE.11</name>
</gene>
<keyword id="KW-0249">Electron transport</keyword>
<keyword id="KW-0472">Membrane</keyword>
<keyword id="KW-0496">Mitochondrion</keyword>
<keyword id="KW-0999">Mitochondrion inner membrane</keyword>
<keyword id="KW-0520">NAD</keyword>
<keyword id="KW-1185">Reference proteome</keyword>
<keyword id="KW-0679">Respiratory chain</keyword>
<keyword id="KW-1278">Translocase</keyword>
<keyword id="KW-0812">Transmembrane</keyword>
<keyword id="KW-1133">Transmembrane helix</keyword>
<keyword id="KW-0813">Transport</keyword>
<keyword id="KW-0830">Ubiquinone</keyword>
<proteinExistence type="inferred from homology"/>
<protein>
    <recommendedName>
        <fullName>NADH-ubiquinone oxidoreductase chain 1</fullName>
        <ecNumber evidence="1">7.1.1.2</ecNumber>
    </recommendedName>
    <alternativeName>
        <fullName>NADH dehydrogenase subunit 1</fullName>
    </alternativeName>
</protein>
<sequence>MILVLLMVILMMIFIVQSIAFITLYERHLLGSSQNRLGPTKVTFMGLAQALLDGVKLLKKEQMTPLNSSEVSFLLVPGISFVVMYLEWFTLPYFFDFISFEYSVLFFLCLIGFSVYTTLISGIVSKSKYGMIGAIRASSQSISYEIAFSLYVLCIIIHNNVFNFVSKFNLSLLIIYIPFLIMVIAELNRAPFDFSEGERELVRGFNVEFARVAFVLLFLSEYGSLIFFSVLSSAMFFKFSIFMAFSIFSLLIFIRSSYPRYRYDLMMSLFWFKLLPISLIMLCFYAVIFYY</sequence>
<reference key="1">
    <citation type="journal article" date="1992" name="Genetics">
        <title>The mitochondrial genomes of two nematodes, Caenorhabditis elegans and Ascaris suum.</title>
        <authorList>
            <person name="Okimoto R."/>
            <person name="Macfarlane J.L."/>
            <person name="Clary D.O."/>
            <person name="Wolstenholme D.R."/>
        </authorList>
    </citation>
    <scope>NUCLEOTIDE SEQUENCE [LARGE SCALE GENOMIC DNA]</scope>
    <source>
        <strain>Bristol N2</strain>
    </source>
</reference>
<reference key="2">
    <citation type="journal article" date="2003" name="Mol. Biol. Evol.">
        <title>Phylogenetics in Caenorhabditis elegans: an analysis of divergence and outcrossing.</title>
        <authorList>
            <person name="Denver D.R."/>
            <person name="Morris K."/>
            <person name="Thomas W.K."/>
        </authorList>
    </citation>
    <scope>NUCLEOTIDE SEQUENCE [GENOMIC DNA] OF 1-192 AND 217-291</scope>
    <scope>VARIANTS MET-181; ASN-238 AND ILE-246</scope>
    <source>
        <strain>AB1</strain>
        <strain>AB2</strain>
        <strain>Bristol N2</strain>
        <strain>CB4852</strain>
        <strain>CB4853</strain>
        <strain>CB4854</strain>
        <strain>CB4855</strain>
        <strain>CB4856</strain>
        <strain>CB4857</strain>
        <strain>CB4858</strain>
        <strain>KR314</strain>
        <strain>PB303</strain>
        <strain>PB306</strain>
        <strain>RW7000</strain>
        <strain>TR403</strain>
    </source>
</reference>
<reference key="3">
    <citation type="journal article" date="1990" name="Nucleic Acids Res.">
        <title>Evidence for the frequent use of TTG as the translation initiation codon of mitochondrial protein genes in the nematodes, Ascaris suum and Caenorhabditis elegans.</title>
        <authorList>
            <person name="Okimoto R."/>
            <person name="Macfarlane J.L."/>
            <person name="Wolstenholme D.R."/>
        </authorList>
    </citation>
    <scope>NUCLEOTIDE SEQUENCE [GENOMIC DNA] OF 1-25</scope>
</reference>
<geneLocation type="mitochondrion"/>
<organism>
    <name type="scientific">Caenorhabditis elegans</name>
    <dbReference type="NCBI Taxonomy" id="6239"/>
    <lineage>
        <taxon>Eukaryota</taxon>
        <taxon>Metazoa</taxon>
        <taxon>Ecdysozoa</taxon>
        <taxon>Nematoda</taxon>
        <taxon>Chromadorea</taxon>
        <taxon>Rhabditida</taxon>
        <taxon>Rhabditina</taxon>
        <taxon>Rhabditomorpha</taxon>
        <taxon>Rhabditoidea</taxon>
        <taxon>Rhabditidae</taxon>
        <taxon>Peloderinae</taxon>
        <taxon>Caenorhabditis</taxon>
    </lineage>
</organism>